<accession>A5IAI0</accession>
<reference key="1">
    <citation type="submission" date="2006-11" db="EMBL/GenBank/DDBJ databases">
        <title>Identification and characterization of a new conjugation/ type IVA secretion system (trb/tra) of L. pneumophila Corby localized on a mobile genomic island.</title>
        <authorList>
            <person name="Gloeckner G."/>
            <person name="Albert-Weissenberger C."/>
            <person name="Weinmann E."/>
            <person name="Jacobi S."/>
            <person name="Schunder E."/>
            <person name="Steinert M."/>
            <person name="Buchrieser C."/>
            <person name="Hacker J."/>
            <person name="Heuner K."/>
        </authorList>
    </citation>
    <scope>NUCLEOTIDE SEQUENCE [LARGE SCALE GENOMIC DNA]</scope>
    <source>
        <strain>Corby</strain>
    </source>
</reference>
<evidence type="ECO:0000255" key="1">
    <source>
        <dbReference type="HAMAP-Rule" id="MF_00045"/>
    </source>
</evidence>
<proteinExistence type="inferred from homology"/>
<gene>
    <name evidence="1" type="primary">orn</name>
    <name type="ordered locus">LPC_0389</name>
</gene>
<keyword id="KW-0963">Cytoplasm</keyword>
<keyword id="KW-0269">Exonuclease</keyword>
<keyword id="KW-0378">Hydrolase</keyword>
<keyword id="KW-0540">Nuclease</keyword>
<feature type="chain" id="PRO_1000004258" description="Oligoribonuclease">
    <location>
        <begin position="1"/>
        <end position="187"/>
    </location>
</feature>
<feature type="domain" description="Exonuclease" evidence="1">
    <location>
        <begin position="7"/>
        <end position="170"/>
    </location>
</feature>
<feature type="active site" evidence="1">
    <location>
        <position position="128"/>
    </location>
</feature>
<comment type="function">
    <text evidence="1">3'-to-5' exoribonuclease specific for small oligoribonucleotides.</text>
</comment>
<comment type="subcellular location">
    <subcellularLocation>
        <location evidence="1">Cytoplasm</location>
    </subcellularLocation>
</comment>
<comment type="similarity">
    <text evidence="1">Belongs to the oligoribonuclease family.</text>
</comment>
<dbReference type="EC" id="3.1.15.-" evidence="1"/>
<dbReference type="EMBL" id="CP000675">
    <property type="protein sequence ID" value="ABQ54380.1"/>
    <property type="molecule type" value="Genomic_DNA"/>
</dbReference>
<dbReference type="RefSeq" id="WP_010948439.1">
    <property type="nucleotide sequence ID" value="NZ_JAPMSS010000010.1"/>
</dbReference>
<dbReference type="SMR" id="A5IAI0"/>
<dbReference type="GeneID" id="57036742"/>
<dbReference type="KEGG" id="lpc:LPC_0389"/>
<dbReference type="HOGENOM" id="CLU_064761_2_0_6"/>
<dbReference type="GO" id="GO:0005737">
    <property type="term" value="C:cytoplasm"/>
    <property type="evidence" value="ECO:0007669"/>
    <property type="project" value="UniProtKB-SubCell"/>
</dbReference>
<dbReference type="GO" id="GO:0000175">
    <property type="term" value="F:3'-5'-RNA exonuclease activity"/>
    <property type="evidence" value="ECO:0007669"/>
    <property type="project" value="InterPro"/>
</dbReference>
<dbReference type="GO" id="GO:0003676">
    <property type="term" value="F:nucleic acid binding"/>
    <property type="evidence" value="ECO:0007669"/>
    <property type="project" value="InterPro"/>
</dbReference>
<dbReference type="GO" id="GO:0006259">
    <property type="term" value="P:DNA metabolic process"/>
    <property type="evidence" value="ECO:0007669"/>
    <property type="project" value="UniProtKB-ARBA"/>
</dbReference>
<dbReference type="CDD" id="cd06135">
    <property type="entry name" value="Orn"/>
    <property type="match status" value="1"/>
</dbReference>
<dbReference type="FunFam" id="3.30.420.10:FF:000003">
    <property type="entry name" value="Oligoribonuclease"/>
    <property type="match status" value="1"/>
</dbReference>
<dbReference type="Gene3D" id="3.30.420.10">
    <property type="entry name" value="Ribonuclease H-like superfamily/Ribonuclease H"/>
    <property type="match status" value="1"/>
</dbReference>
<dbReference type="HAMAP" id="MF_00045">
    <property type="entry name" value="Oligoribonuclease"/>
    <property type="match status" value="1"/>
</dbReference>
<dbReference type="InterPro" id="IPR013520">
    <property type="entry name" value="Exonuclease_RNaseT/DNA_pol3"/>
</dbReference>
<dbReference type="InterPro" id="IPR022894">
    <property type="entry name" value="Oligoribonuclease"/>
</dbReference>
<dbReference type="InterPro" id="IPR012337">
    <property type="entry name" value="RNaseH-like_sf"/>
</dbReference>
<dbReference type="InterPro" id="IPR036397">
    <property type="entry name" value="RNaseH_sf"/>
</dbReference>
<dbReference type="NCBIfam" id="NF003765">
    <property type="entry name" value="PRK05359.1"/>
    <property type="match status" value="1"/>
</dbReference>
<dbReference type="PANTHER" id="PTHR11046">
    <property type="entry name" value="OLIGORIBONUCLEASE, MITOCHONDRIAL"/>
    <property type="match status" value="1"/>
</dbReference>
<dbReference type="PANTHER" id="PTHR11046:SF0">
    <property type="entry name" value="OLIGORIBONUCLEASE, MITOCHONDRIAL"/>
    <property type="match status" value="1"/>
</dbReference>
<dbReference type="Pfam" id="PF00929">
    <property type="entry name" value="RNase_T"/>
    <property type="match status" value="1"/>
</dbReference>
<dbReference type="SMART" id="SM00479">
    <property type="entry name" value="EXOIII"/>
    <property type="match status" value="1"/>
</dbReference>
<dbReference type="SUPFAM" id="SSF53098">
    <property type="entry name" value="Ribonuclease H-like"/>
    <property type="match status" value="1"/>
</dbReference>
<sequence length="187" mass="21737">MKNNQNLIWIDLEMTGLEPEQDRIIEMATIVTDPQLNILAEGPVIAVSQPKILLDSMDAWNTKQHNQSGLVKRVLESNVSESQAEQLTIEFLKQYVDKGKSPMCGNSICQDRRFLYKYMPELAAYFHYRNLDVSSLKELVLRWRPELMNGVVKESKHLALDDIKDSINELIYYRQHFINLPEVKNDK</sequence>
<name>ORN_LEGPC</name>
<protein>
    <recommendedName>
        <fullName evidence="1">Oligoribonuclease</fullName>
        <ecNumber evidence="1">3.1.15.-</ecNumber>
    </recommendedName>
</protein>
<organism>
    <name type="scientific">Legionella pneumophila (strain Corby)</name>
    <dbReference type="NCBI Taxonomy" id="400673"/>
    <lineage>
        <taxon>Bacteria</taxon>
        <taxon>Pseudomonadati</taxon>
        <taxon>Pseudomonadota</taxon>
        <taxon>Gammaproteobacteria</taxon>
        <taxon>Legionellales</taxon>
        <taxon>Legionellaceae</taxon>
        <taxon>Legionella</taxon>
    </lineage>
</organism>